<organism>
    <name type="scientific">Mycoplasma pneumoniae (strain ATCC 29342 / M129 / Subtype 1)</name>
    <name type="common">Mycoplasmoides pneumoniae</name>
    <dbReference type="NCBI Taxonomy" id="272634"/>
    <lineage>
        <taxon>Bacteria</taxon>
        <taxon>Bacillati</taxon>
        <taxon>Mycoplasmatota</taxon>
        <taxon>Mycoplasmoidales</taxon>
        <taxon>Mycoplasmoidaceae</taxon>
        <taxon>Mycoplasmoides</taxon>
    </lineage>
</organism>
<sequence>MIKLTVSHHKLTASGHALFAKKGQDIVCAAVSGIIFGALPWFETNSIAVQEDATVPSLSLELVQPTAKLITGLSVVIMQLKTLAHSYPQFISFEDQRKDE</sequence>
<name>PRP_MYCPN</name>
<feature type="chain" id="PRO_0000210472" description="Ribosomal processing cysteine protease Prp">
    <location>
        <begin position="1"/>
        <end position="100"/>
    </location>
</feature>
<feature type="active site" description="Proton donor" evidence="1">
    <location>
        <position position="16"/>
    </location>
</feature>
<feature type="active site" description="Nucleophile" evidence="1">
    <location>
        <position position="28"/>
    </location>
</feature>
<evidence type="ECO:0000250" key="1">
    <source>
        <dbReference type="UniProtKB" id="Q2FXS9"/>
    </source>
</evidence>
<evidence type="ECO:0000305" key="2"/>
<dbReference type="EC" id="3.4.22.-" evidence="1"/>
<dbReference type="EMBL" id="U00089">
    <property type="protein sequence ID" value="AAB96158.1"/>
    <property type="molecule type" value="Genomic_DNA"/>
</dbReference>
<dbReference type="PIR" id="S73836">
    <property type="entry name" value="S73836"/>
</dbReference>
<dbReference type="RefSeq" id="NP_110014.1">
    <property type="nucleotide sequence ID" value="NC_000912.1"/>
</dbReference>
<dbReference type="RefSeq" id="WP_010874682.1">
    <property type="nucleotide sequence ID" value="NZ_OU342337.1"/>
</dbReference>
<dbReference type="SMR" id="P75459"/>
<dbReference type="STRING" id="272634.MPN_326"/>
<dbReference type="EnsemblBacteria" id="AAB96158">
    <property type="protein sequence ID" value="AAB96158"/>
    <property type="gene ID" value="MPN_326"/>
</dbReference>
<dbReference type="KEGG" id="mpn:MPN_326"/>
<dbReference type="PATRIC" id="fig|272634.6.peg.350"/>
<dbReference type="HOGENOM" id="CLU_140910_1_0_14"/>
<dbReference type="OrthoDB" id="48998at2"/>
<dbReference type="BioCyc" id="MPNE272634:G1GJ3-518-MONOMER"/>
<dbReference type="Proteomes" id="UP000000808">
    <property type="component" value="Chromosome"/>
</dbReference>
<dbReference type="GO" id="GO:0008234">
    <property type="term" value="F:cysteine-type peptidase activity"/>
    <property type="evidence" value="ECO:0007669"/>
    <property type="project" value="UniProtKB-KW"/>
</dbReference>
<dbReference type="GO" id="GO:0006508">
    <property type="term" value="P:proteolysis"/>
    <property type="evidence" value="ECO:0007669"/>
    <property type="project" value="UniProtKB-KW"/>
</dbReference>
<dbReference type="GO" id="GO:0042254">
    <property type="term" value="P:ribosome biogenesis"/>
    <property type="evidence" value="ECO:0007669"/>
    <property type="project" value="UniProtKB-KW"/>
</dbReference>
<dbReference type="CDD" id="cd16332">
    <property type="entry name" value="Prp-like"/>
    <property type="match status" value="1"/>
</dbReference>
<dbReference type="Gene3D" id="3.30.70.1490">
    <property type="entry name" value="Cysteine protease Prp"/>
    <property type="match status" value="1"/>
</dbReference>
<dbReference type="InterPro" id="IPR007422">
    <property type="entry name" value="Peptidase_Prp"/>
</dbReference>
<dbReference type="InterPro" id="IPR036764">
    <property type="entry name" value="Peptidase_Prp_sf"/>
</dbReference>
<dbReference type="Pfam" id="PF04327">
    <property type="entry name" value="Peptidase_Prp"/>
    <property type="match status" value="1"/>
</dbReference>
<dbReference type="SUPFAM" id="SSF118010">
    <property type="entry name" value="TM1457-like"/>
    <property type="match status" value="1"/>
</dbReference>
<reference key="1">
    <citation type="journal article" date="1996" name="Nucleic Acids Res.">
        <title>Complete sequence analysis of the genome of the bacterium Mycoplasma pneumoniae.</title>
        <authorList>
            <person name="Himmelreich R."/>
            <person name="Hilbert H."/>
            <person name="Plagens H."/>
            <person name="Pirkl E."/>
            <person name="Li B.-C."/>
            <person name="Herrmann R."/>
        </authorList>
    </citation>
    <scope>NUCLEOTIDE SEQUENCE [LARGE SCALE GENOMIC DNA]</scope>
    <source>
        <strain>ATCC 29342 / M129 / Subtype 1</strain>
    </source>
</reference>
<accession>P75459</accession>
<comment type="function">
    <text evidence="1">An essential cysteine protease that cleaves the N-terminus from ribosomal protein bL27.</text>
</comment>
<comment type="subunit">
    <text evidence="1">Homodimer.</text>
</comment>
<comment type="similarity">
    <text evidence="2">Belongs to the Prp family.</text>
</comment>
<proteinExistence type="inferred from homology"/>
<gene>
    <name evidence="1" type="primary">prp</name>
    <name type="ordered locus">MPN_326</name>
    <name type="ORF">F10_orf100a</name>
    <name type="ORF">MP510</name>
</gene>
<keyword id="KW-0378">Hydrolase</keyword>
<keyword id="KW-0645">Protease</keyword>
<keyword id="KW-1185">Reference proteome</keyword>
<keyword id="KW-0690">Ribosome biogenesis</keyword>
<keyword id="KW-0788">Thiol protease</keyword>
<protein>
    <recommendedName>
        <fullName evidence="1">Ribosomal processing cysteine protease Prp</fullName>
        <shortName evidence="1">Prp</shortName>
        <ecNumber evidence="1">3.4.22.-</ecNumber>
    </recommendedName>
</protein>